<name>SSUB_BACSU</name>
<dbReference type="EC" id="7.6.2.14" evidence="1"/>
<dbReference type="EMBL" id="Z93102">
    <property type="protein sequence ID" value="CAB07520.1"/>
    <property type="status" value="ALT_INIT"/>
    <property type="molecule type" value="Genomic_DNA"/>
</dbReference>
<dbReference type="EMBL" id="AL009126">
    <property type="protein sequence ID" value="CAB12711.3"/>
    <property type="molecule type" value="Genomic_DNA"/>
</dbReference>
<dbReference type="PIR" id="G69816">
    <property type="entry name" value="G69816"/>
</dbReference>
<dbReference type="RefSeq" id="NP_388763.3">
    <property type="nucleotide sequence ID" value="NC_000964.3"/>
</dbReference>
<dbReference type="RefSeq" id="WP_010886450.1">
    <property type="nucleotide sequence ID" value="NZ_OZ025638.1"/>
</dbReference>
<dbReference type="SMR" id="P97027"/>
<dbReference type="FunCoup" id="P97027">
    <property type="interactions" value="449"/>
</dbReference>
<dbReference type="STRING" id="224308.BSU08830"/>
<dbReference type="PaxDb" id="224308-BSU08830"/>
<dbReference type="EnsemblBacteria" id="CAB12711">
    <property type="protein sequence ID" value="CAB12711"/>
    <property type="gene ID" value="BSU_08830"/>
</dbReference>
<dbReference type="GeneID" id="939730"/>
<dbReference type="KEGG" id="bsu:BSU08830"/>
<dbReference type="PATRIC" id="fig|224308.43.peg.924"/>
<dbReference type="eggNOG" id="COG1116">
    <property type="taxonomic scope" value="Bacteria"/>
</dbReference>
<dbReference type="InParanoid" id="P97027"/>
<dbReference type="OrthoDB" id="9802264at2"/>
<dbReference type="PhylomeDB" id="P97027"/>
<dbReference type="BioCyc" id="BSUB:BSU08830-MONOMER"/>
<dbReference type="Proteomes" id="UP000001570">
    <property type="component" value="Chromosome"/>
</dbReference>
<dbReference type="GO" id="GO:0005886">
    <property type="term" value="C:plasma membrane"/>
    <property type="evidence" value="ECO:0007669"/>
    <property type="project" value="UniProtKB-SubCell"/>
</dbReference>
<dbReference type="GO" id="GO:0005524">
    <property type="term" value="F:ATP binding"/>
    <property type="evidence" value="ECO:0007669"/>
    <property type="project" value="UniProtKB-KW"/>
</dbReference>
<dbReference type="GO" id="GO:0016887">
    <property type="term" value="F:ATP hydrolysis activity"/>
    <property type="evidence" value="ECO:0007669"/>
    <property type="project" value="InterPro"/>
</dbReference>
<dbReference type="CDD" id="cd03293">
    <property type="entry name" value="ABC_NrtD_SsuB_transporters"/>
    <property type="match status" value="1"/>
</dbReference>
<dbReference type="Gene3D" id="3.40.50.300">
    <property type="entry name" value="P-loop containing nucleotide triphosphate hydrolases"/>
    <property type="match status" value="1"/>
</dbReference>
<dbReference type="InterPro" id="IPR003593">
    <property type="entry name" value="AAA+_ATPase"/>
</dbReference>
<dbReference type="InterPro" id="IPR003439">
    <property type="entry name" value="ABC_transporter-like_ATP-bd"/>
</dbReference>
<dbReference type="InterPro" id="IPR017871">
    <property type="entry name" value="ABC_transporter-like_CS"/>
</dbReference>
<dbReference type="InterPro" id="IPR050166">
    <property type="entry name" value="ABC_transporter_ATP-bind"/>
</dbReference>
<dbReference type="InterPro" id="IPR027417">
    <property type="entry name" value="P-loop_NTPase"/>
</dbReference>
<dbReference type="PANTHER" id="PTHR42788:SF13">
    <property type="entry name" value="ALIPHATIC SULFONATES IMPORT ATP-BINDING PROTEIN SSUB"/>
    <property type="match status" value="1"/>
</dbReference>
<dbReference type="PANTHER" id="PTHR42788">
    <property type="entry name" value="TAURINE IMPORT ATP-BINDING PROTEIN-RELATED"/>
    <property type="match status" value="1"/>
</dbReference>
<dbReference type="Pfam" id="PF00005">
    <property type="entry name" value="ABC_tran"/>
    <property type="match status" value="1"/>
</dbReference>
<dbReference type="SMART" id="SM00382">
    <property type="entry name" value="AAA"/>
    <property type="match status" value="1"/>
</dbReference>
<dbReference type="SUPFAM" id="SSF52540">
    <property type="entry name" value="P-loop containing nucleoside triphosphate hydrolases"/>
    <property type="match status" value="1"/>
</dbReference>
<dbReference type="PROSITE" id="PS00211">
    <property type="entry name" value="ABC_TRANSPORTER_1"/>
    <property type="match status" value="1"/>
</dbReference>
<dbReference type="PROSITE" id="PS50893">
    <property type="entry name" value="ABC_TRANSPORTER_2"/>
    <property type="match status" value="1"/>
</dbReference>
<dbReference type="PROSITE" id="PS51291">
    <property type="entry name" value="SSUB"/>
    <property type="match status" value="1"/>
</dbReference>
<protein>
    <recommendedName>
        <fullName evidence="1">Aliphatic sulfonates import ATP-binding protein SsuB</fullName>
        <ecNumber evidence="1">7.6.2.14</ecNumber>
    </recommendedName>
</protein>
<keyword id="KW-0067">ATP-binding</keyword>
<keyword id="KW-1003">Cell membrane</keyword>
<keyword id="KW-0472">Membrane</keyword>
<keyword id="KW-0547">Nucleotide-binding</keyword>
<keyword id="KW-1185">Reference proteome</keyword>
<keyword id="KW-1278">Translocase</keyword>
<keyword id="KW-0813">Transport</keyword>
<organism>
    <name type="scientific">Bacillus subtilis (strain 168)</name>
    <dbReference type="NCBI Taxonomy" id="224308"/>
    <lineage>
        <taxon>Bacteria</taxon>
        <taxon>Bacillati</taxon>
        <taxon>Bacillota</taxon>
        <taxon>Bacilli</taxon>
        <taxon>Bacillales</taxon>
        <taxon>Bacillaceae</taxon>
        <taxon>Bacillus</taxon>
    </lineage>
</organism>
<accession>P97027</accession>
<feature type="chain" id="PRO_0000092975" description="Aliphatic sulfonates import ATP-binding protein SsuB">
    <location>
        <begin position="1"/>
        <end position="255"/>
    </location>
</feature>
<feature type="domain" description="ABC transporter" evidence="1">
    <location>
        <begin position="7"/>
        <end position="231"/>
    </location>
</feature>
<feature type="binding site" evidence="1">
    <location>
        <begin position="39"/>
        <end position="46"/>
    </location>
    <ligand>
        <name>ATP</name>
        <dbReference type="ChEBI" id="CHEBI:30616"/>
    </ligand>
</feature>
<feature type="sequence conflict" description="In Ref. 1; CAB07520." evidence="3" ref="1">
    <original>A</original>
    <variation>T</variation>
    <location>
        <position position="142"/>
    </location>
</feature>
<sequence>MAVTISIKEKAFVQEGRKNTVLENIELSIAPGEFLTLIGPSGCGKSTLLKIIAGLDSEYDGSVEINGRSVTAPGIQQGFIFQEHRLFPWLTVEQNIAADLNLKDPKVKQKVDELIEIVRLKGSEKAYPRELSGGMSQRVAIARALLREPEVLLLDEPFGALDAFTRKHLQDVLLDIWRKKKTTMILVTHDIDESVYLGNELAILKAKPGKIHKLMPIHLAYPRNRTTPDFQAIRQRVLSEFEKTEDLEYAEGSGI</sequence>
<gene>
    <name evidence="1" type="primary">ssuB</name>
    <name type="synonym">ycbE</name>
    <name type="synonym">ygaL</name>
    <name type="ordered locus">BSU08830</name>
</gene>
<proteinExistence type="evidence at protein level"/>
<reference key="1">
    <citation type="journal article" date="1998" name="Microbiology">
        <title>Bacillus subtilis genes for the utilization of sulfur from aliphatic sulfonates.</title>
        <authorList>
            <person name="van der Ploeg J.R."/>
            <person name="Cummings N.J."/>
            <person name="Leisinger T."/>
            <person name="Connerton I.F."/>
        </authorList>
    </citation>
    <scope>NUCLEOTIDE SEQUENCE [GENOMIC DNA]</scope>
    <scope>FUNCTION IN ALIPHATIC SULFONATES AND TAURINE TRANSPORT</scope>
    <scope>INDUCTION</scope>
    <source>
        <strain>168</strain>
    </source>
</reference>
<reference key="2">
    <citation type="journal article" date="1997" name="Nature">
        <title>The complete genome sequence of the Gram-positive bacterium Bacillus subtilis.</title>
        <authorList>
            <person name="Kunst F."/>
            <person name="Ogasawara N."/>
            <person name="Moszer I."/>
            <person name="Albertini A.M."/>
            <person name="Alloni G."/>
            <person name="Azevedo V."/>
            <person name="Bertero M.G."/>
            <person name="Bessieres P."/>
            <person name="Bolotin A."/>
            <person name="Borchert S."/>
            <person name="Borriss R."/>
            <person name="Boursier L."/>
            <person name="Brans A."/>
            <person name="Braun M."/>
            <person name="Brignell S.C."/>
            <person name="Bron S."/>
            <person name="Brouillet S."/>
            <person name="Bruschi C.V."/>
            <person name="Caldwell B."/>
            <person name="Capuano V."/>
            <person name="Carter N.M."/>
            <person name="Choi S.-K."/>
            <person name="Codani J.-J."/>
            <person name="Connerton I.F."/>
            <person name="Cummings N.J."/>
            <person name="Daniel R.A."/>
            <person name="Denizot F."/>
            <person name="Devine K.M."/>
            <person name="Duesterhoeft A."/>
            <person name="Ehrlich S.D."/>
            <person name="Emmerson P.T."/>
            <person name="Entian K.-D."/>
            <person name="Errington J."/>
            <person name="Fabret C."/>
            <person name="Ferrari E."/>
            <person name="Foulger D."/>
            <person name="Fritz C."/>
            <person name="Fujita M."/>
            <person name="Fujita Y."/>
            <person name="Fuma S."/>
            <person name="Galizzi A."/>
            <person name="Galleron N."/>
            <person name="Ghim S.-Y."/>
            <person name="Glaser P."/>
            <person name="Goffeau A."/>
            <person name="Golightly E.J."/>
            <person name="Grandi G."/>
            <person name="Guiseppi G."/>
            <person name="Guy B.J."/>
            <person name="Haga K."/>
            <person name="Haiech J."/>
            <person name="Harwood C.R."/>
            <person name="Henaut A."/>
            <person name="Hilbert H."/>
            <person name="Holsappel S."/>
            <person name="Hosono S."/>
            <person name="Hullo M.-F."/>
            <person name="Itaya M."/>
            <person name="Jones L.-M."/>
            <person name="Joris B."/>
            <person name="Karamata D."/>
            <person name="Kasahara Y."/>
            <person name="Klaerr-Blanchard M."/>
            <person name="Klein C."/>
            <person name="Kobayashi Y."/>
            <person name="Koetter P."/>
            <person name="Koningstein G."/>
            <person name="Krogh S."/>
            <person name="Kumano M."/>
            <person name="Kurita K."/>
            <person name="Lapidus A."/>
            <person name="Lardinois S."/>
            <person name="Lauber J."/>
            <person name="Lazarevic V."/>
            <person name="Lee S.-M."/>
            <person name="Levine A."/>
            <person name="Liu H."/>
            <person name="Masuda S."/>
            <person name="Mauel C."/>
            <person name="Medigue C."/>
            <person name="Medina N."/>
            <person name="Mellado R.P."/>
            <person name="Mizuno M."/>
            <person name="Moestl D."/>
            <person name="Nakai S."/>
            <person name="Noback M."/>
            <person name="Noone D."/>
            <person name="O'Reilly M."/>
            <person name="Ogawa K."/>
            <person name="Ogiwara A."/>
            <person name="Oudega B."/>
            <person name="Park S.-H."/>
            <person name="Parro V."/>
            <person name="Pohl T.M."/>
            <person name="Portetelle D."/>
            <person name="Porwollik S."/>
            <person name="Prescott A.M."/>
            <person name="Presecan E."/>
            <person name="Pujic P."/>
            <person name="Purnelle B."/>
            <person name="Rapoport G."/>
            <person name="Rey M."/>
            <person name="Reynolds S."/>
            <person name="Rieger M."/>
            <person name="Rivolta C."/>
            <person name="Rocha E."/>
            <person name="Roche B."/>
            <person name="Rose M."/>
            <person name="Sadaie Y."/>
            <person name="Sato T."/>
            <person name="Scanlan E."/>
            <person name="Schleich S."/>
            <person name="Schroeter R."/>
            <person name="Scoffone F."/>
            <person name="Sekiguchi J."/>
            <person name="Sekowska A."/>
            <person name="Seror S.J."/>
            <person name="Serror P."/>
            <person name="Shin B.-S."/>
            <person name="Soldo B."/>
            <person name="Sorokin A."/>
            <person name="Tacconi E."/>
            <person name="Takagi T."/>
            <person name="Takahashi H."/>
            <person name="Takemaru K."/>
            <person name="Takeuchi M."/>
            <person name="Tamakoshi A."/>
            <person name="Tanaka T."/>
            <person name="Terpstra P."/>
            <person name="Tognoni A."/>
            <person name="Tosato V."/>
            <person name="Uchiyama S."/>
            <person name="Vandenbol M."/>
            <person name="Vannier F."/>
            <person name="Vassarotti A."/>
            <person name="Viari A."/>
            <person name="Wambutt R."/>
            <person name="Wedler E."/>
            <person name="Wedler H."/>
            <person name="Weitzenegger T."/>
            <person name="Winters P."/>
            <person name="Wipat A."/>
            <person name="Yamamoto H."/>
            <person name="Yamane K."/>
            <person name="Yasumoto K."/>
            <person name="Yata K."/>
            <person name="Yoshida K."/>
            <person name="Yoshikawa H.-F."/>
            <person name="Zumstein E."/>
            <person name="Yoshikawa H."/>
            <person name="Danchin A."/>
        </authorList>
    </citation>
    <scope>NUCLEOTIDE SEQUENCE [LARGE SCALE GENOMIC DNA]</scope>
    <source>
        <strain>168</strain>
    </source>
</reference>
<reference key="3">
    <citation type="journal article" date="2009" name="Microbiology">
        <title>From a consortium sequence to a unified sequence: the Bacillus subtilis 168 reference genome a decade later.</title>
        <authorList>
            <person name="Barbe V."/>
            <person name="Cruveiller S."/>
            <person name="Kunst F."/>
            <person name="Lenoble P."/>
            <person name="Meurice G."/>
            <person name="Sekowska A."/>
            <person name="Vallenet D."/>
            <person name="Wang T."/>
            <person name="Moszer I."/>
            <person name="Medigue C."/>
            <person name="Danchin A."/>
        </authorList>
    </citation>
    <scope>SEQUENCE REVISION TO 142</scope>
</reference>
<comment type="function">
    <text evidence="1 2 3">Part of the ABC transporter complex SsuABC involved in aliphatic sulfonates import. Responsible for energy coupling to the transport system (Probable). Is also involved in taurine transport.</text>
</comment>
<comment type="catalytic activity">
    <reaction evidence="1">
        <text>ATP + H2O + aliphatic sulfonate-[sulfonate-binding protein]Side 1 = ADP + phosphate + aliphatic sulfonateSide 2 + [sulfonate-binding protein]Side 1.</text>
        <dbReference type="EC" id="7.6.2.14"/>
    </reaction>
</comment>
<comment type="subunit">
    <text evidence="1">The complex is composed of two ATP-binding proteins (SsuB), two transmembrane proteins (SsuC) and a solute-binding protein (SsuA).</text>
</comment>
<comment type="subcellular location">
    <subcellularLocation>
        <location evidence="1">Cell membrane</location>
        <topology evidence="1">Peripheral membrane protein</topology>
    </subcellularLocation>
</comment>
<comment type="induction">
    <text evidence="2">Repressed by sulfate and cysteine.</text>
</comment>
<comment type="similarity">
    <text evidence="1">Belongs to the ABC transporter superfamily. Aliphatic sulfonates importer (TC 3.A.1.17.2) family.</text>
</comment>
<comment type="sequence caution" evidence="3">
    <conflict type="erroneous initiation">
        <sequence resource="EMBL-CDS" id="CAB07520"/>
    </conflict>
</comment>
<evidence type="ECO:0000255" key="1">
    <source>
        <dbReference type="HAMAP-Rule" id="MF_01724"/>
    </source>
</evidence>
<evidence type="ECO:0000269" key="2">
    <source>
    </source>
</evidence>
<evidence type="ECO:0000305" key="3"/>